<accession>B9W9A9</accession>
<sequence length="299" mass="33925">MASQSSNHYRVYIKNLSYSTSEKDLEELFGKFEPVNVLIPSYTIHFSRSGRHRPLGIAYAEFRTPEQIESVVKEFDGHVLKNRKITVKKHMAYDPNNRRFSFKRKSNIKNGKMNQGGSSTGEILAPVAKEFLVRDDETVSIGQQKKNPPRKPELSMDTIMIQKVHGKVTDESLKDFFKEYNPSQIYIFKSKKPKLNPMNLTGSHVNVLVKLDVTQTKLDEIISNLRSQKMNGRYISMKPAYKSKVLEVEKAIAESKSLENTGEGENMIVDEKASPTNKHGKNAEHDNSEISLIGTVSNC</sequence>
<evidence type="ECO:0000250" key="1"/>
<evidence type="ECO:0000255" key="2">
    <source>
        <dbReference type="PROSITE-ProRule" id="PRU00176"/>
    </source>
</evidence>
<evidence type="ECO:0000256" key="3">
    <source>
        <dbReference type="SAM" id="MobiDB-lite"/>
    </source>
</evidence>
<evidence type="ECO:0000305" key="4"/>
<dbReference type="EMBL" id="FM992688">
    <property type="protein sequence ID" value="CAX45385.1"/>
    <property type="molecule type" value="Genomic_DNA"/>
</dbReference>
<dbReference type="RefSeq" id="XP_002417679.1">
    <property type="nucleotide sequence ID" value="XM_002417634.1"/>
</dbReference>
<dbReference type="GeneID" id="8045227"/>
<dbReference type="KEGG" id="cdu:CD36_10360"/>
<dbReference type="CGD" id="CAL0000163858">
    <property type="gene designation" value="Cd36_10360"/>
</dbReference>
<dbReference type="VEuPathDB" id="FungiDB:CD36_10360"/>
<dbReference type="eggNOG" id="ENOG502RZDM">
    <property type="taxonomic scope" value="Eukaryota"/>
</dbReference>
<dbReference type="HOGENOM" id="CLU_042558_0_0_1"/>
<dbReference type="OrthoDB" id="439808at2759"/>
<dbReference type="Proteomes" id="UP000002605">
    <property type="component" value="Chromosome 1"/>
</dbReference>
<dbReference type="GO" id="GO:0005737">
    <property type="term" value="C:cytoplasm"/>
    <property type="evidence" value="ECO:0007669"/>
    <property type="project" value="TreeGrafter"/>
</dbReference>
<dbReference type="GO" id="GO:0005634">
    <property type="term" value="C:nucleus"/>
    <property type="evidence" value="ECO:0007669"/>
    <property type="project" value="TreeGrafter"/>
</dbReference>
<dbReference type="GO" id="GO:1990904">
    <property type="term" value="C:ribonucleoprotein complex"/>
    <property type="evidence" value="ECO:0007669"/>
    <property type="project" value="TreeGrafter"/>
</dbReference>
<dbReference type="GO" id="GO:0003729">
    <property type="term" value="F:mRNA binding"/>
    <property type="evidence" value="ECO:0007669"/>
    <property type="project" value="TreeGrafter"/>
</dbReference>
<dbReference type="CDD" id="cd12409">
    <property type="entry name" value="RRM1_RRT5"/>
    <property type="match status" value="1"/>
</dbReference>
<dbReference type="CDD" id="cd12410">
    <property type="entry name" value="RRM2_RRT5"/>
    <property type="match status" value="1"/>
</dbReference>
<dbReference type="Gene3D" id="3.30.70.330">
    <property type="match status" value="2"/>
</dbReference>
<dbReference type="InterPro" id="IPR012677">
    <property type="entry name" value="Nucleotide-bd_a/b_plait_sf"/>
</dbReference>
<dbReference type="InterPro" id="IPR035979">
    <property type="entry name" value="RBD_domain_sf"/>
</dbReference>
<dbReference type="InterPro" id="IPR000504">
    <property type="entry name" value="RRM_dom"/>
</dbReference>
<dbReference type="InterPro" id="IPR034244">
    <property type="entry name" value="Rrt5_RRM1"/>
</dbReference>
<dbReference type="InterPro" id="IPR034247">
    <property type="entry name" value="Rrt5_RRM2"/>
</dbReference>
<dbReference type="InterPro" id="IPR050374">
    <property type="entry name" value="RRT5_SRSF_SR"/>
</dbReference>
<dbReference type="PANTHER" id="PTHR23003:SF54">
    <property type="entry name" value="REGULATOR OF RDNA TRANSCRIPTION PROTEIN 5"/>
    <property type="match status" value="1"/>
</dbReference>
<dbReference type="PANTHER" id="PTHR23003">
    <property type="entry name" value="RNA RECOGNITION MOTIF RRM DOMAIN CONTAINING PROTEIN"/>
    <property type="match status" value="1"/>
</dbReference>
<dbReference type="Pfam" id="PF00076">
    <property type="entry name" value="RRM_1"/>
    <property type="match status" value="1"/>
</dbReference>
<dbReference type="SMART" id="SM00360">
    <property type="entry name" value="RRM"/>
    <property type="match status" value="2"/>
</dbReference>
<dbReference type="SUPFAM" id="SSF54928">
    <property type="entry name" value="RNA-binding domain, RBD"/>
    <property type="match status" value="1"/>
</dbReference>
<dbReference type="PROSITE" id="PS50102">
    <property type="entry name" value="RRM"/>
    <property type="match status" value="1"/>
</dbReference>
<reference key="1">
    <citation type="journal article" date="2009" name="Genome Res.">
        <title>Comparative genomics of the fungal pathogens Candida dubliniensis and Candida albicans.</title>
        <authorList>
            <person name="Jackson A.P."/>
            <person name="Gamble J.A."/>
            <person name="Yeomans T."/>
            <person name="Moran G.P."/>
            <person name="Saunders D."/>
            <person name="Harris D."/>
            <person name="Aslett M."/>
            <person name="Barrell J.F."/>
            <person name="Butler G."/>
            <person name="Citiulo F."/>
            <person name="Coleman D.C."/>
            <person name="de Groot P.W.J."/>
            <person name="Goodwin T.J."/>
            <person name="Quail M.A."/>
            <person name="McQuillan J."/>
            <person name="Munro C.A."/>
            <person name="Pain A."/>
            <person name="Poulter R.T."/>
            <person name="Rajandream M.A."/>
            <person name="Renauld H."/>
            <person name="Spiering M.J."/>
            <person name="Tivey A."/>
            <person name="Gow N.A.R."/>
            <person name="Barrell B."/>
            <person name="Sullivan D.J."/>
            <person name="Berriman M."/>
        </authorList>
    </citation>
    <scope>NUCLEOTIDE SEQUENCE [LARGE SCALE GENOMIC DNA]</scope>
    <source>
        <strain>CD36 / ATCC MYA-646 / CBS 7987 / NCPF 3949 / NRRL Y-17841</strain>
    </source>
</reference>
<organism>
    <name type="scientific">Candida dubliniensis (strain CD36 / ATCC MYA-646 / CBS 7987 / NCPF 3949 / NRRL Y-17841)</name>
    <name type="common">Yeast</name>
    <dbReference type="NCBI Taxonomy" id="573826"/>
    <lineage>
        <taxon>Eukaryota</taxon>
        <taxon>Fungi</taxon>
        <taxon>Dikarya</taxon>
        <taxon>Ascomycota</taxon>
        <taxon>Saccharomycotina</taxon>
        <taxon>Pichiomycetes</taxon>
        <taxon>Debaryomycetaceae</taxon>
        <taxon>Candida/Lodderomyces clade</taxon>
        <taxon>Candida</taxon>
    </lineage>
</organism>
<feature type="chain" id="PRO_0000404355" description="Regulator of rDNA transcription protein 5">
    <location>
        <begin position="1"/>
        <end position="299"/>
    </location>
</feature>
<feature type="domain" description="RRM" evidence="2">
    <location>
        <begin position="9"/>
        <end position="92"/>
    </location>
</feature>
<feature type="region of interest" description="Disordered" evidence="3">
    <location>
        <begin position="262"/>
        <end position="299"/>
    </location>
</feature>
<protein>
    <recommendedName>
        <fullName>Regulator of rDNA transcription protein 5</fullName>
    </recommendedName>
</protein>
<keyword id="KW-0694">RNA-binding</keyword>
<keyword id="KW-0804">Transcription</keyword>
<keyword id="KW-0805">Transcription regulation</keyword>
<gene>
    <name type="primary">RRT5</name>
    <name type="ORF">CD36_10360</name>
</gene>
<proteinExistence type="inferred from homology"/>
<name>RRT5_CANDC</name>
<comment type="function">
    <text evidence="1">May be involved in the modulation of rDNA transcription.</text>
</comment>
<comment type="similarity">
    <text evidence="4">Belongs to the RRT5 family.</text>
</comment>